<sequence length="160" mass="16888">MRGLKKKRRIQIIAIAAVALTIATIMIGTAMRDGINFFRSPSEVAEAPPPESEVFRIGGLVEEGTLVRGESETTTFMVTDGGASIPVSYTGVLPDLFGENEGTVALGSMQNGVFMATEVLARHDETYMPKEVVDALKEQGVYKDPNATDADGGYGGASGS</sequence>
<dbReference type="EMBL" id="CP000830">
    <property type="protein sequence ID" value="ABV93500.1"/>
    <property type="molecule type" value="Genomic_DNA"/>
</dbReference>
<dbReference type="RefSeq" id="WP_012178430.1">
    <property type="nucleotide sequence ID" value="NC_009952.1"/>
</dbReference>
<dbReference type="SMR" id="A8LMF5"/>
<dbReference type="STRING" id="398580.Dshi_1758"/>
<dbReference type="KEGG" id="dsh:Dshi_1758"/>
<dbReference type="eggNOG" id="COG2332">
    <property type="taxonomic scope" value="Bacteria"/>
</dbReference>
<dbReference type="HOGENOM" id="CLU_079503_1_1_5"/>
<dbReference type="OrthoDB" id="9793584at2"/>
<dbReference type="Proteomes" id="UP000006833">
    <property type="component" value="Chromosome"/>
</dbReference>
<dbReference type="GO" id="GO:0005886">
    <property type="term" value="C:plasma membrane"/>
    <property type="evidence" value="ECO:0007669"/>
    <property type="project" value="UniProtKB-SubCell"/>
</dbReference>
<dbReference type="GO" id="GO:0020037">
    <property type="term" value="F:heme binding"/>
    <property type="evidence" value="ECO:0007669"/>
    <property type="project" value="InterPro"/>
</dbReference>
<dbReference type="GO" id="GO:0046872">
    <property type="term" value="F:metal ion binding"/>
    <property type="evidence" value="ECO:0007669"/>
    <property type="project" value="UniProtKB-KW"/>
</dbReference>
<dbReference type="GO" id="GO:0017004">
    <property type="term" value="P:cytochrome complex assembly"/>
    <property type="evidence" value="ECO:0007669"/>
    <property type="project" value="UniProtKB-KW"/>
</dbReference>
<dbReference type="Gene3D" id="2.40.50.140">
    <property type="entry name" value="Nucleic acid-binding proteins"/>
    <property type="match status" value="1"/>
</dbReference>
<dbReference type="HAMAP" id="MF_01959">
    <property type="entry name" value="CcmE"/>
    <property type="match status" value="1"/>
</dbReference>
<dbReference type="InterPro" id="IPR004329">
    <property type="entry name" value="CcmE"/>
</dbReference>
<dbReference type="InterPro" id="IPR036127">
    <property type="entry name" value="CcmE-like_sf"/>
</dbReference>
<dbReference type="InterPro" id="IPR012340">
    <property type="entry name" value="NA-bd_OB-fold"/>
</dbReference>
<dbReference type="NCBIfam" id="NF009727">
    <property type="entry name" value="PRK13254.1-1"/>
    <property type="match status" value="1"/>
</dbReference>
<dbReference type="NCBIfam" id="NF009731">
    <property type="entry name" value="PRK13254.1-5"/>
    <property type="match status" value="1"/>
</dbReference>
<dbReference type="PANTHER" id="PTHR34128">
    <property type="entry name" value="CYTOCHROME C-TYPE BIOGENESIS PROTEIN CCME HOMOLOG, MITOCHONDRIAL"/>
    <property type="match status" value="1"/>
</dbReference>
<dbReference type="PANTHER" id="PTHR34128:SF2">
    <property type="entry name" value="CYTOCHROME C-TYPE BIOGENESIS PROTEIN CCME HOMOLOG, MITOCHONDRIAL"/>
    <property type="match status" value="1"/>
</dbReference>
<dbReference type="Pfam" id="PF03100">
    <property type="entry name" value="CcmE"/>
    <property type="match status" value="1"/>
</dbReference>
<dbReference type="SUPFAM" id="SSF82093">
    <property type="entry name" value="Heme chaperone CcmE"/>
    <property type="match status" value="1"/>
</dbReference>
<feature type="chain" id="PRO_1000088524" description="Cytochrome c-type biogenesis protein CcmE">
    <location>
        <begin position="1"/>
        <end position="160"/>
    </location>
</feature>
<feature type="topological domain" description="Cytoplasmic" evidence="1">
    <location>
        <begin position="1"/>
        <end position="9"/>
    </location>
</feature>
<feature type="transmembrane region" description="Helical; Signal-anchor for type II membrane protein" evidence="1">
    <location>
        <begin position="10"/>
        <end position="30"/>
    </location>
</feature>
<feature type="topological domain" description="Periplasmic" evidence="1">
    <location>
        <begin position="31"/>
        <end position="160"/>
    </location>
</feature>
<feature type="region of interest" description="Disordered" evidence="2">
    <location>
        <begin position="141"/>
        <end position="160"/>
    </location>
</feature>
<feature type="binding site" description="covalent" evidence="1">
    <location>
        <position position="123"/>
    </location>
    <ligand>
        <name>heme</name>
        <dbReference type="ChEBI" id="CHEBI:30413"/>
    </ligand>
</feature>
<feature type="binding site" description="axial binding residue" evidence="1">
    <location>
        <position position="127"/>
    </location>
    <ligand>
        <name>heme</name>
        <dbReference type="ChEBI" id="CHEBI:30413"/>
    </ligand>
    <ligandPart>
        <name>Fe</name>
        <dbReference type="ChEBI" id="CHEBI:18248"/>
    </ligandPart>
</feature>
<keyword id="KW-0997">Cell inner membrane</keyword>
<keyword id="KW-1003">Cell membrane</keyword>
<keyword id="KW-0201">Cytochrome c-type biogenesis</keyword>
<keyword id="KW-0349">Heme</keyword>
<keyword id="KW-0408">Iron</keyword>
<keyword id="KW-0472">Membrane</keyword>
<keyword id="KW-0479">Metal-binding</keyword>
<keyword id="KW-1185">Reference proteome</keyword>
<keyword id="KW-0735">Signal-anchor</keyword>
<keyword id="KW-0812">Transmembrane</keyword>
<keyword id="KW-1133">Transmembrane helix</keyword>
<proteinExistence type="inferred from homology"/>
<gene>
    <name evidence="1" type="primary">ccmE</name>
    <name evidence="1" type="synonym">cycJ</name>
    <name type="ordered locus">Dshi_1758</name>
</gene>
<accession>A8LMF5</accession>
<organism>
    <name type="scientific">Dinoroseobacter shibae (strain DSM 16493 / NCIMB 14021 / DFL 12)</name>
    <dbReference type="NCBI Taxonomy" id="398580"/>
    <lineage>
        <taxon>Bacteria</taxon>
        <taxon>Pseudomonadati</taxon>
        <taxon>Pseudomonadota</taxon>
        <taxon>Alphaproteobacteria</taxon>
        <taxon>Rhodobacterales</taxon>
        <taxon>Roseobacteraceae</taxon>
        <taxon>Dinoroseobacter</taxon>
    </lineage>
</organism>
<name>CCME_DINSH</name>
<reference key="1">
    <citation type="journal article" date="2010" name="ISME J.">
        <title>The complete genome sequence of the algal symbiont Dinoroseobacter shibae: a hitchhiker's guide to life in the sea.</title>
        <authorList>
            <person name="Wagner-Dobler I."/>
            <person name="Ballhausen B."/>
            <person name="Berger M."/>
            <person name="Brinkhoff T."/>
            <person name="Buchholz I."/>
            <person name="Bunk B."/>
            <person name="Cypionka H."/>
            <person name="Daniel R."/>
            <person name="Drepper T."/>
            <person name="Gerdts G."/>
            <person name="Hahnke S."/>
            <person name="Han C."/>
            <person name="Jahn D."/>
            <person name="Kalhoefer D."/>
            <person name="Kiss H."/>
            <person name="Klenk H.P."/>
            <person name="Kyrpides N."/>
            <person name="Liebl W."/>
            <person name="Liesegang H."/>
            <person name="Meincke L."/>
            <person name="Pati A."/>
            <person name="Petersen J."/>
            <person name="Piekarski T."/>
            <person name="Pommerenke C."/>
            <person name="Pradella S."/>
            <person name="Pukall R."/>
            <person name="Rabus R."/>
            <person name="Stackebrandt E."/>
            <person name="Thole S."/>
            <person name="Thompson L."/>
            <person name="Tielen P."/>
            <person name="Tomasch J."/>
            <person name="von Jan M."/>
            <person name="Wanphrut N."/>
            <person name="Wichels A."/>
            <person name="Zech H."/>
            <person name="Simon M."/>
        </authorList>
    </citation>
    <scope>NUCLEOTIDE SEQUENCE [LARGE SCALE GENOMIC DNA]</scope>
    <source>
        <strain>DSM 16493 / NCIMB 14021 / DFL 12</strain>
    </source>
</reference>
<comment type="function">
    <text evidence="1">Heme chaperone required for the biogenesis of c-type cytochromes. Transiently binds heme delivered by CcmC and transfers the heme to apo-cytochromes in a process facilitated by CcmF and CcmH.</text>
</comment>
<comment type="subcellular location">
    <subcellularLocation>
        <location evidence="1">Cell inner membrane</location>
        <topology evidence="1">Single-pass type II membrane protein</topology>
        <orientation evidence="1">Periplasmic side</orientation>
    </subcellularLocation>
</comment>
<comment type="similarity">
    <text evidence="1">Belongs to the CcmE/CycJ family.</text>
</comment>
<protein>
    <recommendedName>
        <fullName evidence="1">Cytochrome c-type biogenesis protein CcmE</fullName>
    </recommendedName>
    <alternativeName>
        <fullName evidence="1">Cytochrome c maturation protein E</fullName>
    </alternativeName>
    <alternativeName>
        <fullName evidence="1">Heme chaperone CcmE</fullName>
    </alternativeName>
</protein>
<evidence type="ECO:0000255" key="1">
    <source>
        <dbReference type="HAMAP-Rule" id="MF_01959"/>
    </source>
</evidence>
<evidence type="ECO:0000256" key="2">
    <source>
        <dbReference type="SAM" id="MobiDB-lite"/>
    </source>
</evidence>